<proteinExistence type="inferred from homology"/>
<keyword id="KW-0004">4Fe-4S</keyword>
<keyword id="KW-0067">ATP-binding</keyword>
<keyword id="KW-0963">Cytoplasm</keyword>
<keyword id="KW-0408">Iron</keyword>
<keyword id="KW-0411">Iron-sulfur</keyword>
<keyword id="KW-0479">Metal-binding</keyword>
<keyword id="KW-0547">Nucleotide-binding</keyword>
<keyword id="KW-1185">Reference proteome</keyword>
<dbReference type="EMBL" id="CM000361">
    <property type="protein sequence ID" value="EDX05253.1"/>
    <property type="molecule type" value="Genomic_DNA"/>
</dbReference>
<dbReference type="SMR" id="B4Q7F5"/>
<dbReference type="STRING" id="7240.B4Q7F5"/>
<dbReference type="HOGENOM" id="CLU_024839_0_1_1"/>
<dbReference type="OMA" id="VSGCPMR"/>
<dbReference type="OrthoDB" id="1741334at2759"/>
<dbReference type="PhylomeDB" id="B4Q7F5"/>
<dbReference type="Proteomes" id="UP000000304">
    <property type="component" value="Chromosome 2L"/>
</dbReference>
<dbReference type="GO" id="GO:0005829">
    <property type="term" value="C:cytosol"/>
    <property type="evidence" value="ECO:0000250"/>
    <property type="project" value="UniProtKB"/>
</dbReference>
<dbReference type="GO" id="GO:0051539">
    <property type="term" value="F:4 iron, 4 sulfur cluster binding"/>
    <property type="evidence" value="ECO:0007669"/>
    <property type="project" value="UniProtKB-UniRule"/>
</dbReference>
<dbReference type="GO" id="GO:0005524">
    <property type="term" value="F:ATP binding"/>
    <property type="evidence" value="ECO:0007669"/>
    <property type="project" value="UniProtKB-KW"/>
</dbReference>
<dbReference type="GO" id="GO:0140663">
    <property type="term" value="F:ATP-dependent FeS chaperone activity"/>
    <property type="evidence" value="ECO:0007669"/>
    <property type="project" value="InterPro"/>
</dbReference>
<dbReference type="GO" id="GO:0051536">
    <property type="term" value="F:iron-sulfur cluster binding"/>
    <property type="evidence" value="ECO:0000250"/>
    <property type="project" value="UniProtKB"/>
</dbReference>
<dbReference type="GO" id="GO:0046872">
    <property type="term" value="F:metal ion binding"/>
    <property type="evidence" value="ECO:0007669"/>
    <property type="project" value="UniProtKB-KW"/>
</dbReference>
<dbReference type="GO" id="GO:0016226">
    <property type="term" value="P:iron-sulfur cluster assembly"/>
    <property type="evidence" value="ECO:0000250"/>
    <property type="project" value="UniProtKB"/>
</dbReference>
<dbReference type="CDD" id="cd02037">
    <property type="entry name" value="Mrp_NBP35"/>
    <property type="match status" value="1"/>
</dbReference>
<dbReference type="FunFam" id="3.40.50.300:FF:001759">
    <property type="entry name" value="Cytosolic Fe-S cluster assembly factor NUBP1 homolog"/>
    <property type="match status" value="1"/>
</dbReference>
<dbReference type="Gene3D" id="3.40.50.300">
    <property type="entry name" value="P-loop containing nucleotide triphosphate hydrolases"/>
    <property type="match status" value="1"/>
</dbReference>
<dbReference type="HAMAP" id="MF_02040">
    <property type="entry name" value="Mrp_NBP35"/>
    <property type="match status" value="1"/>
</dbReference>
<dbReference type="HAMAP" id="MF_03038">
    <property type="entry name" value="NUBP1"/>
    <property type="match status" value="1"/>
</dbReference>
<dbReference type="InterPro" id="IPR019591">
    <property type="entry name" value="Mrp/NBP35_ATP-bd"/>
</dbReference>
<dbReference type="InterPro" id="IPR028601">
    <property type="entry name" value="NUBP1/Nbp35"/>
</dbReference>
<dbReference type="InterPro" id="IPR027417">
    <property type="entry name" value="P-loop_NTPase"/>
</dbReference>
<dbReference type="InterPro" id="IPR033756">
    <property type="entry name" value="YlxH/NBP35"/>
</dbReference>
<dbReference type="PANTHER" id="PTHR23264:SF35">
    <property type="entry name" value="CYTOSOLIC FE-S CLUSTER ASSEMBLY FACTOR NUBP1"/>
    <property type="match status" value="1"/>
</dbReference>
<dbReference type="PANTHER" id="PTHR23264">
    <property type="entry name" value="NUCLEOTIDE-BINDING PROTEIN NBP35 YEAST -RELATED"/>
    <property type="match status" value="1"/>
</dbReference>
<dbReference type="Pfam" id="PF10609">
    <property type="entry name" value="ParA"/>
    <property type="match status" value="1"/>
</dbReference>
<dbReference type="SUPFAM" id="SSF52540">
    <property type="entry name" value="P-loop containing nucleoside triphosphate hydrolases"/>
    <property type="match status" value="1"/>
</dbReference>
<protein>
    <recommendedName>
        <fullName evidence="2">Cytosolic Fe-S cluster assembly factor Nubp1 homolog</fullName>
    </recommendedName>
</protein>
<feature type="chain" id="PRO_0000382609" description="Cytosolic Fe-S cluster assembly factor Nubp1 homolog">
    <location>
        <begin position="1"/>
        <end position="311"/>
    </location>
</feature>
<feature type="region of interest" description="Disordered" evidence="3">
    <location>
        <begin position="1"/>
        <end position="20"/>
    </location>
</feature>
<feature type="binding site" evidence="2">
    <location>
        <position position="9"/>
    </location>
    <ligand>
        <name>[4Fe-4S] cluster</name>
        <dbReference type="ChEBI" id="CHEBI:49883"/>
        <label>1</label>
    </ligand>
</feature>
<feature type="binding site" evidence="2">
    <location>
        <position position="23"/>
    </location>
    <ligand>
        <name>[4Fe-4S] cluster</name>
        <dbReference type="ChEBI" id="CHEBI:49883"/>
        <label>1</label>
    </ligand>
</feature>
<feature type="binding site" evidence="2">
    <location>
        <position position="26"/>
    </location>
    <ligand>
        <name>[4Fe-4S] cluster</name>
        <dbReference type="ChEBI" id="CHEBI:49883"/>
        <label>1</label>
    </ligand>
</feature>
<feature type="binding site" evidence="2">
    <location>
        <position position="32"/>
    </location>
    <ligand>
        <name>[4Fe-4S] cluster</name>
        <dbReference type="ChEBI" id="CHEBI:49883"/>
        <label>1</label>
    </ligand>
</feature>
<feature type="binding site" evidence="2">
    <location>
        <begin position="63"/>
        <end position="70"/>
    </location>
    <ligand>
        <name>ATP</name>
        <dbReference type="ChEBI" id="CHEBI:30616"/>
    </ligand>
</feature>
<feature type="binding site" evidence="2">
    <location>
        <position position="240"/>
    </location>
    <ligand>
        <name>[4Fe-4S] cluster</name>
        <dbReference type="ChEBI" id="CHEBI:49883"/>
        <label>2</label>
        <note>ligand shared with heterodimeric partner</note>
    </ligand>
</feature>
<feature type="binding site" evidence="2">
    <location>
        <position position="243"/>
    </location>
    <ligand>
        <name>[4Fe-4S] cluster</name>
        <dbReference type="ChEBI" id="CHEBI:49883"/>
        <label>2</label>
        <note>ligand shared with heterodimeric partner</note>
    </ligand>
</feature>
<name>NUBP1_DROSI</name>
<sequence length="311" mass="33038">MQAPPPEHCPGVESENAGKGSACSGCPNQGVCSDPNKKLEDPGKALVVESMKDVKHKLLILSGKGGVGKSTVTSLLTRYLARSNPDSNFGVLDIDICGPSQPRLMGALGESVHQSGYGWSPVGIEDNVCLMSIGFLLGSVDDAIIWRGPKKNGMIRQFLSEVDWGNLDLLLLDTPPGTSDEHLSVVSYLKDDTNPESLRAVMVTTPQEVSLLDVRKEINFCKKQNIPIVGVIENMSSFRCGHCGNTSEIFPAKTGGAVAMCAEMGIPLLGSLPLDQQISKACDSGEDLTTFKNVTSEALEGICSKIMASIS</sequence>
<gene>
    <name evidence="1" type="primary">Nubp1</name>
    <name type="ORF">GD24076</name>
</gene>
<evidence type="ECO:0000250" key="1">
    <source>
        <dbReference type="UniProtKB" id="Q9VJI9"/>
    </source>
</evidence>
<evidence type="ECO:0000255" key="2">
    <source>
        <dbReference type="HAMAP-Rule" id="MF_03038"/>
    </source>
</evidence>
<evidence type="ECO:0000256" key="3">
    <source>
        <dbReference type="SAM" id="MobiDB-lite"/>
    </source>
</evidence>
<accession>B4Q7F5</accession>
<organism>
    <name type="scientific">Drosophila simulans</name>
    <name type="common">Fruit fly</name>
    <dbReference type="NCBI Taxonomy" id="7240"/>
    <lineage>
        <taxon>Eukaryota</taxon>
        <taxon>Metazoa</taxon>
        <taxon>Ecdysozoa</taxon>
        <taxon>Arthropoda</taxon>
        <taxon>Hexapoda</taxon>
        <taxon>Insecta</taxon>
        <taxon>Pterygota</taxon>
        <taxon>Neoptera</taxon>
        <taxon>Endopterygota</taxon>
        <taxon>Diptera</taxon>
        <taxon>Brachycera</taxon>
        <taxon>Muscomorpha</taxon>
        <taxon>Ephydroidea</taxon>
        <taxon>Drosophilidae</taxon>
        <taxon>Drosophila</taxon>
        <taxon>Sophophora</taxon>
    </lineage>
</organism>
<reference key="1">
    <citation type="journal article" date="2007" name="Nature">
        <title>Evolution of genes and genomes on the Drosophila phylogeny.</title>
        <authorList>
            <consortium name="Drosophila 12 genomes consortium"/>
        </authorList>
    </citation>
    <scope>NUCLEOTIDE SEQUENCE [LARGE SCALE GENOMIC DNA]</scope>
</reference>
<comment type="function">
    <text evidence="2">Component of the cytosolic iron-sulfur (Fe/S) protein assembly (CIA) machinery. Required for maturation of extramitochondrial Fe-S proteins. The Nubp1-Nubp2 heterotetramer forms a Fe-S scaffold complex, mediating the de novo assembly of an Fe-S cluster and its transfer to target apoproteins.</text>
</comment>
<comment type="cofactor">
    <cofactor evidence="2">
        <name>[4Fe-4S] cluster</name>
        <dbReference type="ChEBI" id="CHEBI:49883"/>
    </cofactor>
    <text evidence="2">Binds 4 [4Fe-4S] clusters per heterotetramer. Contains two stable clusters in the N-termini of Nubp1 and two labile, bridging clusters between subunits of the Nubp1-Nubp2 heterotetramer.</text>
</comment>
<comment type="subunit">
    <text evidence="2">Heterotetramer of 2 Nubp1 and 2 Nubp2 chains.</text>
</comment>
<comment type="subcellular location">
    <subcellularLocation>
        <location evidence="2">Cytoplasm</location>
    </subcellularLocation>
</comment>
<comment type="similarity">
    <text evidence="2">Belongs to the Mrp/NBP35 ATP-binding proteins family. NUBP1/NBP35 subfamily.</text>
</comment>